<protein>
    <recommendedName>
        <fullName evidence="1">Threonine--tRNA ligase</fullName>
        <ecNumber evidence="1">6.1.1.3</ecNumber>
    </recommendedName>
    <alternativeName>
        <fullName evidence="1">Threonyl-tRNA synthetase</fullName>
        <shortName evidence="1">ThrRS</shortName>
    </alternativeName>
</protein>
<proteinExistence type="inferred from homology"/>
<gene>
    <name evidence="1" type="primary">thrS</name>
    <name type="ordered locus">RHOS4_19920</name>
    <name type="ORF">RSP_0385</name>
</gene>
<dbReference type="EC" id="6.1.1.3" evidence="1"/>
<dbReference type="EMBL" id="CP000143">
    <property type="protein sequence ID" value="ABA79560.1"/>
    <property type="molecule type" value="Genomic_DNA"/>
</dbReference>
<dbReference type="RefSeq" id="WP_011338194.1">
    <property type="nucleotide sequence ID" value="NC_007493.2"/>
</dbReference>
<dbReference type="RefSeq" id="YP_353461.1">
    <property type="nucleotide sequence ID" value="NC_007493.2"/>
</dbReference>
<dbReference type="SMR" id="Q3J0X4"/>
<dbReference type="STRING" id="272943.RSP_0385"/>
<dbReference type="EnsemblBacteria" id="ABA79560">
    <property type="protein sequence ID" value="ABA79560"/>
    <property type="gene ID" value="RSP_0385"/>
</dbReference>
<dbReference type="GeneID" id="3718893"/>
<dbReference type="KEGG" id="rsp:RSP_0385"/>
<dbReference type="PATRIC" id="fig|272943.9.peg.2331"/>
<dbReference type="eggNOG" id="COG0441">
    <property type="taxonomic scope" value="Bacteria"/>
</dbReference>
<dbReference type="OrthoDB" id="9802304at2"/>
<dbReference type="PhylomeDB" id="Q3J0X4"/>
<dbReference type="Proteomes" id="UP000002703">
    <property type="component" value="Chromosome 1"/>
</dbReference>
<dbReference type="GO" id="GO:0005737">
    <property type="term" value="C:cytoplasm"/>
    <property type="evidence" value="ECO:0007669"/>
    <property type="project" value="UniProtKB-SubCell"/>
</dbReference>
<dbReference type="GO" id="GO:0005524">
    <property type="term" value="F:ATP binding"/>
    <property type="evidence" value="ECO:0007669"/>
    <property type="project" value="UniProtKB-UniRule"/>
</dbReference>
<dbReference type="GO" id="GO:0046872">
    <property type="term" value="F:metal ion binding"/>
    <property type="evidence" value="ECO:0007669"/>
    <property type="project" value="UniProtKB-KW"/>
</dbReference>
<dbReference type="GO" id="GO:0004829">
    <property type="term" value="F:threonine-tRNA ligase activity"/>
    <property type="evidence" value="ECO:0007669"/>
    <property type="project" value="UniProtKB-UniRule"/>
</dbReference>
<dbReference type="GO" id="GO:0000049">
    <property type="term" value="F:tRNA binding"/>
    <property type="evidence" value="ECO:0007669"/>
    <property type="project" value="UniProtKB-KW"/>
</dbReference>
<dbReference type="GO" id="GO:0006435">
    <property type="term" value="P:threonyl-tRNA aminoacylation"/>
    <property type="evidence" value="ECO:0007669"/>
    <property type="project" value="UniProtKB-UniRule"/>
</dbReference>
<dbReference type="CDD" id="cd01667">
    <property type="entry name" value="TGS_ThrRS"/>
    <property type="match status" value="1"/>
</dbReference>
<dbReference type="CDD" id="cd00860">
    <property type="entry name" value="ThrRS_anticodon"/>
    <property type="match status" value="1"/>
</dbReference>
<dbReference type="CDD" id="cd00771">
    <property type="entry name" value="ThrRS_core"/>
    <property type="match status" value="1"/>
</dbReference>
<dbReference type="FunFam" id="3.10.20.30:FF:000005">
    <property type="entry name" value="Threonine--tRNA ligase"/>
    <property type="match status" value="1"/>
</dbReference>
<dbReference type="FunFam" id="3.30.930.10:FF:000002">
    <property type="entry name" value="Threonine--tRNA ligase"/>
    <property type="match status" value="1"/>
</dbReference>
<dbReference type="FunFam" id="3.30.980.10:FF:000001">
    <property type="entry name" value="Threonine--tRNA ligase"/>
    <property type="match status" value="1"/>
</dbReference>
<dbReference type="FunFam" id="3.40.50.800:FF:000001">
    <property type="entry name" value="Threonine--tRNA ligase"/>
    <property type="match status" value="1"/>
</dbReference>
<dbReference type="Gene3D" id="3.10.20.30">
    <property type="match status" value="1"/>
</dbReference>
<dbReference type="Gene3D" id="3.30.54.20">
    <property type="match status" value="1"/>
</dbReference>
<dbReference type="Gene3D" id="3.40.50.800">
    <property type="entry name" value="Anticodon-binding domain"/>
    <property type="match status" value="1"/>
</dbReference>
<dbReference type="Gene3D" id="3.30.930.10">
    <property type="entry name" value="Bira Bifunctional Protein, Domain 2"/>
    <property type="match status" value="1"/>
</dbReference>
<dbReference type="Gene3D" id="3.30.980.10">
    <property type="entry name" value="Threonyl-trna Synthetase, Chain A, domain 2"/>
    <property type="match status" value="1"/>
</dbReference>
<dbReference type="HAMAP" id="MF_00184">
    <property type="entry name" value="Thr_tRNA_synth"/>
    <property type="match status" value="1"/>
</dbReference>
<dbReference type="InterPro" id="IPR002314">
    <property type="entry name" value="aa-tRNA-synt_IIb"/>
</dbReference>
<dbReference type="InterPro" id="IPR006195">
    <property type="entry name" value="aa-tRNA-synth_II"/>
</dbReference>
<dbReference type="InterPro" id="IPR045864">
    <property type="entry name" value="aa-tRNA-synth_II/BPL/LPL"/>
</dbReference>
<dbReference type="InterPro" id="IPR004154">
    <property type="entry name" value="Anticodon-bd"/>
</dbReference>
<dbReference type="InterPro" id="IPR036621">
    <property type="entry name" value="Anticodon-bd_dom_sf"/>
</dbReference>
<dbReference type="InterPro" id="IPR012675">
    <property type="entry name" value="Beta-grasp_dom_sf"/>
</dbReference>
<dbReference type="InterPro" id="IPR004095">
    <property type="entry name" value="TGS"/>
</dbReference>
<dbReference type="InterPro" id="IPR012676">
    <property type="entry name" value="TGS-like"/>
</dbReference>
<dbReference type="InterPro" id="IPR002320">
    <property type="entry name" value="Thr-tRNA-ligase_IIa"/>
</dbReference>
<dbReference type="InterPro" id="IPR018163">
    <property type="entry name" value="Thr/Ala-tRNA-synth_IIc_edit"/>
</dbReference>
<dbReference type="InterPro" id="IPR047246">
    <property type="entry name" value="ThrRS_anticodon"/>
</dbReference>
<dbReference type="InterPro" id="IPR033728">
    <property type="entry name" value="ThrRS_core"/>
</dbReference>
<dbReference type="InterPro" id="IPR012947">
    <property type="entry name" value="tRNA_SAD"/>
</dbReference>
<dbReference type="NCBIfam" id="TIGR00418">
    <property type="entry name" value="thrS"/>
    <property type="match status" value="1"/>
</dbReference>
<dbReference type="PANTHER" id="PTHR11451:SF44">
    <property type="entry name" value="THREONINE--TRNA LIGASE, CHLOROPLASTIC_MITOCHONDRIAL 2"/>
    <property type="match status" value="1"/>
</dbReference>
<dbReference type="PANTHER" id="PTHR11451">
    <property type="entry name" value="THREONINE-TRNA LIGASE"/>
    <property type="match status" value="1"/>
</dbReference>
<dbReference type="Pfam" id="PF03129">
    <property type="entry name" value="HGTP_anticodon"/>
    <property type="match status" value="1"/>
</dbReference>
<dbReference type="Pfam" id="PF02824">
    <property type="entry name" value="TGS"/>
    <property type="match status" value="1"/>
</dbReference>
<dbReference type="Pfam" id="PF00587">
    <property type="entry name" value="tRNA-synt_2b"/>
    <property type="match status" value="1"/>
</dbReference>
<dbReference type="Pfam" id="PF07973">
    <property type="entry name" value="tRNA_SAD"/>
    <property type="match status" value="1"/>
</dbReference>
<dbReference type="PRINTS" id="PR01047">
    <property type="entry name" value="TRNASYNTHTHR"/>
</dbReference>
<dbReference type="SMART" id="SM00863">
    <property type="entry name" value="tRNA_SAD"/>
    <property type="match status" value="1"/>
</dbReference>
<dbReference type="SUPFAM" id="SSF52954">
    <property type="entry name" value="Class II aaRS ABD-related"/>
    <property type="match status" value="1"/>
</dbReference>
<dbReference type="SUPFAM" id="SSF55681">
    <property type="entry name" value="Class II aaRS and biotin synthetases"/>
    <property type="match status" value="1"/>
</dbReference>
<dbReference type="SUPFAM" id="SSF81271">
    <property type="entry name" value="TGS-like"/>
    <property type="match status" value="1"/>
</dbReference>
<dbReference type="SUPFAM" id="SSF55186">
    <property type="entry name" value="ThrRS/AlaRS common domain"/>
    <property type="match status" value="1"/>
</dbReference>
<dbReference type="PROSITE" id="PS50862">
    <property type="entry name" value="AA_TRNA_LIGASE_II"/>
    <property type="match status" value="1"/>
</dbReference>
<dbReference type="PROSITE" id="PS51880">
    <property type="entry name" value="TGS"/>
    <property type="match status" value="1"/>
</dbReference>
<sequence length="646" mass="73352">MAQISLTFPDGKAREFPAGITPAEVAASISTSLGKKAISASVDGRHYDLQWPIETDAKIAIHTMADEAQALELIRHDLAHIMARAVQELWPDVKVTIGPVVANGWYYDFDREETFTPEDLGAIEKRMKEIINAREAVKTELWERARAIAYYEERGEPFKVELVQAIPEDQSIRMYWHGGWQDLCRGPHLQHTGQVPADAFKLMSVAGAYWRGDSANKQLQRIYGVAFKTRDELKAYLHMLEEAAKRDHRKLGREMELFHLQEEAPGMVFWHPNGWQIYRTLEDYMRGRLRQAGYKEIRTPQVVDRKLWEASGHWEAYKENMFIVEVEEEHAKEKRINALKPMNCPCHVQVYNQGLKSYRDLPLRLAEFGSCHRYESSGSMHGLMRVRGFVQDDAHIFCTEDQIESECAAFIELLSSVYKDLGFDSFEIKLSTRPEVRIGSDEAWDKVETALENAIRKVGAAYEIDPGEGAFYGPKLDFKLTDAIGRKWQCGTFQVDPNLPTRLGAEYIGEDGAKHRPYMLHRAILGSFERFIGILIENYAGKLPFWLAPRQVVVASIVSDADPYVAEVVAALRARGVRAEADTRNEKINYKVREHSVGKVPVILAIGMQEVEARSVSVRRLGETRTESMGLDQVVDQLAADARIPG</sequence>
<accession>Q3J0X4</accession>
<feature type="chain" id="PRO_1000020490" description="Threonine--tRNA ligase">
    <location>
        <begin position="1"/>
        <end position="646"/>
    </location>
</feature>
<feature type="domain" description="TGS" evidence="2">
    <location>
        <begin position="1"/>
        <end position="63"/>
    </location>
</feature>
<feature type="region of interest" description="Catalytic" evidence="1">
    <location>
        <begin position="247"/>
        <end position="544"/>
    </location>
</feature>
<feature type="binding site" evidence="1">
    <location>
        <position position="344"/>
    </location>
    <ligand>
        <name>Zn(2+)</name>
        <dbReference type="ChEBI" id="CHEBI:29105"/>
    </ligand>
</feature>
<feature type="binding site" evidence="1">
    <location>
        <position position="395"/>
    </location>
    <ligand>
        <name>Zn(2+)</name>
        <dbReference type="ChEBI" id="CHEBI:29105"/>
    </ligand>
</feature>
<feature type="binding site" evidence="1">
    <location>
        <position position="521"/>
    </location>
    <ligand>
        <name>Zn(2+)</name>
        <dbReference type="ChEBI" id="CHEBI:29105"/>
    </ligand>
</feature>
<evidence type="ECO:0000255" key="1">
    <source>
        <dbReference type="HAMAP-Rule" id="MF_00184"/>
    </source>
</evidence>
<evidence type="ECO:0000255" key="2">
    <source>
        <dbReference type="PROSITE-ProRule" id="PRU01228"/>
    </source>
</evidence>
<keyword id="KW-0030">Aminoacyl-tRNA synthetase</keyword>
<keyword id="KW-0067">ATP-binding</keyword>
<keyword id="KW-0963">Cytoplasm</keyword>
<keyword id="KW-0436">Ligase</keyword>
<keyword id="KW-0479">Metal-binding</keyword>
<keyword id="KW-0547">Nucleotide-binding</keyword>
<keyword id="KW-0648">Protein biosynthesis</keyword>
<keyword id="KW-1185">Reference proteome</keyword>
<keyword id="KW-0694">RNA-binding</keyword>
<keyword id="KW-0820">tRNA-binding</keyword>
<keyword id="KW-0862">Zinc</keyword>
<name>SYT_CERS4</name>
<reference key="1">
    <citation type="submission" date="2005-09" db="EMBL/GenBank/DDBJ databases">
        <title>Complete sequence of chromosome 1 of Rhodobacter sphaeroides 2.4.1.</title>
        <authorList>
            <person name="Copeland A."/>
            <person name="Lucas S."/>
            <person name="Lapidus A."/>
            <person name="Barry K."/>
            <person name="Detter J.C."/>
            <person name="Glavina T."/>
            <person name="Hammon N."/>
            <person name="Israni S."/>
            <person name="Pitluck S."/>
            <person name="Richardson P."/>
            <person name="Mackenzie C."/>
            <person name="Choudhary M."/>
            <person name="Larimer F."/>
            <person name="Hauser L.J."/>
            <person name="Land M."/>
            <person name="Donohue T.J."/>
            <person name="Kaplan S."/>
        </authorList>
    </citation>
    <scope>NUCLEOTIDE SEQUENCE [LARGE SCALE GENOMIC DNA]</scope>
    <source>
        <strain>ATCC 17023 / DSM 158 / JCM 6121 / CCUG 31486 / LMG 2827 / NBRC 12203 / NCIMB 8253 / ATH 2.4.1.</strain>
    </source>
</reference>
<organism>
    <name type="scientific">Cereibacter sphaeroides (strain ATCC 17023 / DSM 158 / JCM 6121 / CCUG 31486 / LMG 2827 / NBRC 12203 / NCIMB 8253 / ATH 2.4.1.)</name>
    <name type="common">Rhodobacter sphaeroides</name>
    <dbReference type="NCBI Taxonomy" id="272943"/>
    <lineage>
        <taxon>Bacteria</taxon>
        <taxon>Pseudomonadati</taxon>
        <taxon>Pseudomonadota</taxon>
        <taxon>Alphaproteobacteria</taxon>
        <taxon>Rhodobacterales</taxon>
        <taxon>Paracoccaceae</taxon>
        <taxon>Cereibacter</taxon>
    </lineage>
</organism>
<comment type="function">
    <text evidence="1">Catalyzes the attachment of threonine to tRNA(Thr) in a two-step reaction: L-threonine is first activated by ATP to form Thr-AMP and then transferred to the acceptor end of tRNA(Thr). Also edits incorrectly charged L-seryl-tRNA(Thr).</text>
</comment>
<comment type="catalytic activity">
    <reaction evidence="1">
        <text>tRNA(Thr) + L-threonine + ATP = L-threonyl-tRNA(Thr) + AMP + diphosphate + H(+)</text>
        <dbReference type="Rhea" id="RHEA:24624"/>
        <dbReference type="Rhea" id="RHEA-COMP:9670"/>
        <dbReference type="Rhea" id="RHEA-COMP:9704"/>
        <dbReference type="ChEBI" id="CHEBI:15378"/>
        <dbReference type="ChEBI" id="CHEBI:30616"/>
        <dbReference type="ChEBI" id="CHEBI:33019"/>
        <dbReference type="ChEBI" id="CHEBI:57926"/>
        <dbReference type="ChEBI" id="CHEBI:78442"/>
        <dbReference type="ChEBI" id="CHEBI:78534"/>
        <dbReference type="ChEBI" id="CHEBI:456215"/>
        <dbReference type="EC" id="6.1.1.3"/>
    </reaction>
</comment>
<comment type="cofactor">
    <cofactor evidence="1">
        <name>Zn(2+)</name>
        <dbReference type="ChEBI" id="CHEBI:29105"/>
    </cofactor>
    <text evidence="1">Binds 1 zinc ion per subunit.</text>
</comment>
<comment type="subunit">
    <text evidence="1">Homodimer.</text>
</comment>
<comment type="subcellular location">
    <subcellularLocation>
        <location evidence="1">Cytoplasm</location>
    </subcellularLocation>
</comment>
<comment type="similarity">
    <text evidence="1">Belongs to the class-II aminoacyl-tRNA synthetase family.</text>
</comment>